<organism>
    <name type="scientific">Human herpesvirus 8 type P (isolate GK18)</name>
    <name type="common">HHV-8</name>
    <name type="synonym">Kaposi's sarcoma-associated herpesvirus</name>
    <dbReference type="NCBI Taxonomy" id="868565"/>
    <lineage>
        <taxon>Viruses</taxon>
        <taxon>Duplodnaviria</taxon>
        <taxon>Heunggongvirae</taxon>
        <taxon>Peploviricota</taxon>
        <taxon>Herviviricetes</taxon>
        <taxon>Herpesvirales</taxon>
        <taxon>Orthoherpesviridae</taxon>
        <taxon>Gammaherpesvirinae</taxon>
        <taxon>Rhadinovirus</taxon>
        <taxon>Rhadinovirus humangamma8</taxon>
        <taxon>Human herpesvirus 8</taxon>
    </lineage>
</organism>
<sequence>MRWKRMERRPPLTPLRRSRTQSSGGGLTICPRCALKLPKATRISERPWASTWQLNQHIQVSKTKKATAYLKAPREWGQCTHQDPDWSKRLGRGAFGIIVPISEDLCVKQFDSRREFFYEAIANDLMQATRERYPMHSGGSRLLGFVQPCIPCRSIVYPRMKCNLLQLDWSQVNLSVMAAEFTGLMAAVSFLNRYCGMVHCDVSPDNILATGDLTPMNPGRLVLTDFGSVALHSGSKWTNLVVTSNLGFKQHCYDFRVPPKLICKHLYKPSCVLFQCYLSSLGKMHAQVLDQPYPISPNMGLTIDMSSLGYTLLTCLELYLDLPLNNPLKFLGSATRDGRPEPMYYLGFMIPRVVMTQILSAVWTMTLDLGLDCTGKAQAIPMRQEHQLAFQKQCYLYKANQKAESLANCSDKLNCPMLKSLVRKLLERDFFNHGGHPHTRGLVF</sequence>
<organismHost>
    <name type="scientific">Homo sapiens</name>
    <name type="common">Human</name>
    <dbReference type="NCBI Taxonomy" id="9606"/>
</organismHost>
<evidence type="ECO:0000255" key="1">
    <source>
        <dbReference type="PROSITE-ProRule" id="PRU00159"/>
    </source>
</evidence>
<evidence type="ECO:0000256" key="2">
    <source>
        <dbReference type="SAM" id="MobiDB-lite"/>
    </source>
</evidence>
<evidence type="ECO:0000269" key="3">
    <source>
    </source>
</evidence>
<evidence type="ECO:0000269" key="4">
    <source>
    </source>
</evidence>
<evidence type="ECO:0000269" key="5">
    <source>
    </source>
</evidence>
<evidence type="ECO:0000269" key="6">
    <source>
    </source>
</evidence>
<evidence type="ECO:0000269" key="7">
    <source>
    </source>
</evidence>
<evidence type="ECO:0000269" key="8">
    <source>
    </source>
</evidence>
<evidence type="ECO:0000269" key="9">
    <source>
    </source>
</evidence>
<proteinExistence type="evidence at protein level"/>
<feature type="chain" id="PRO_0000423845" description="Viral protein kinase">
    <location>
        <begin position="1"/>
        <end position="444"/>
    </location>
</feature>
<feature type="region of interest" description="Disordered" evidence="2">
    <location>
        <begin position="1"/>
        <end position="25"/>
    </location>
</feature>
<feature type="active site" description="Proton acceptor" evidence="1">
    <location>
        <position position="201"/>
    </location>
</feature>
<feature type="binding site" evidence="1">
    <location>
        <begin position="90"/>
        <end position="98"/>
    </location>
    <ligand>
        <name>ATP</name>
        <dbReference type="ChEBI" id="CHEBI:30616"/>
    </ligand>
</feature>
<feature type="binding site" evidence="1">
    <location>
        <position position="108"/>
    </location>
    <ligand>
        <name>ATP</name>
        <dbReference type="ChEBI" id="CHEBI:30616"/>
    </ligand>
</feature>
<feature type="mutagenesis site" description="Complete loss of autophosphorylation." evidence="3">
    <original>K</original>
    <variation>Q</variation>
    <location>
        <position position="108"/>
    </location>
</feature>
<keyword id="KW-0067">ATP-binding</keyword>
<keyword id="KW-1048">Host nucleus</keyword>
<keyword id="KW-0418">Kinase</keyword>
<keyword id="KW-0547">Nucleotide-binding</keyword>
<keyword id="KW-1185">Reference proteome</keyword>
<keyword id="KW-0808">Transferase</keyword>
<name>VPK_HHV8P</name>
<gene>
    <name type="primary">vPK</name>
    <name type="ORF">ORF36</name>
</gene>
<accession>F5HGH5</accession>
<comment type="function">
    <text evidence="3 4 5 6 7 8 9">Serine/threonine protein kinase that plays a role in viral gene expression, viral DNA replication and encapsidation, and nuclear egress of virions. Regulates host transcriptional activity through interactions with RNA helicase and c-Jun N-terminal kinase (JNK) and viral transcriptional activity through interactions with the viral protein K-bZIP/K8 (PubMed:17108053). Induces host chromosome condensation and phosphorylation of histone H3. Phosphorylates the DNA polymerase processivity factor hence modulating its processivity function. Inhibits the host Wnt signaling pathway via direct interactions with beta-catenin/CTNNB1 while the kinase activity of vPK is not required for this inhibitory activity. Also phosphorylates host SAMHD1 and thereby counteracts its antiviral effect by reducing its dNTP hydrolase activity.</text>
</comment>
<comment type="catalytic activity">
    <reaction evidence="9">
        <text>L-seryl-[protein] + ATP = O-phospho-L-seryl-[protein] + ADP + H(+)</text>
        <dbReference type="Rhea" id="RHEA:17989"/>
        <dbReference type="Rhea" id="RHEA-COMP:9863"/>
        <dbReference type="Rhea" id="RHEA-COMP:11604"/>
        <dbReference type="ChEBI" id="CHEBI:15378"/>
        <dbReference type="ChEBI" id="CHEBI:29999"/>
        <dbReference type="ChEBI" id="CHEBI:30616"/>
        <dbReference type="ChEBI" id="CHEBI:83421"/>
        <dbReference type="ChEBI" id="CHEBI:456216"/>
        <dbReference type="EC" id="2.7.11.1"/>
    </reaction>
</comment>
<comment type="catalytic activity">
    <reaction evidence="9">
        <text>L-threonyl-[protein] + ATP = O-phospho-L-threonyl-[protein] + ADP + H(+)</text>
        <dbReference type="Rhea" id="RHEA:46608"/>
        <dbReference type="Rhea" id="RHEA-COMP:11060"/>
        <dbReference type="Rhea" id="RHEA-COMP:11605"/>
        <dbReference type="ChEBI" id="CHEBI:15378"/>
        <dbReference type="ChEBI" id="CHEBI:30013"/>
        <dbReference type="ChEBI" id="CHEBI:30616"/>
        <dbReference type="ChEBI" id="CHEBI:61977"/>
        <dbReference type="ChEBI" id="CHEBI:456216"/>
        <dbReference type="EC" id="2.7.11.1"/>
    </reaction>
</comment>
<comment type="subunit">
    <text evidence="5 8">Interacts with protein K-bZIP/K8 (PubMed:17108053). Interacts with host beta-catenin/CTNNB1 (PubMed:29432739).</text>
</comment>
<comment type="subcellular location">
    <subcellularLocation>
        <location evidence="3">Host nucleus</location>
    </subcellularLocation>
</comment>
<comment type="PTM">
    <text>AUtophosphorylated.</text>
</comment>
<protein>
    <recommendedName>
        <fullName>Viral protein kinase</fullName>
        <ecNumber evidence="9">2.7.11.1</ecNumber>
    </recommendedName>
</protein>
<dbReference type="EC" id="2.7.11.1" evidence="9"/>
<dbReference type="EMBL" id="AF148805">
    <property type="protein sequence ID" value="ABD28887.1"/>
    <property type="molecule type" value="Genomic_DNA"/>
</dbReference>
<dbReference type="RefSeq" id="YP_001129389.1">
    <property type="nucleotide sequence ID" value="NC_009333.1"/>
</dbReference>
<dbReference type="BioGRID" id="1777007">
    <property type="interactions" value="3"/>
</dbReference>
<dbReference type="DNASU" id="4961434"/>
<dbReference type="KEGG" id="vg:4961434"/>
<dbReference type="Proteomes" id="UP000000942">
    <property type="component" value="Segment"/>
</dbReference>
<dbReference type="GO" id="GO:0042025">
    <property type="term" value="C:host cell nucleus"/>
    <property type="evidence" value="ECO:0007669"/>
    <property type="project" value="UniProtKB-SubCell"/>
</dbReference>
<dbReference type="GO" id="GO:0005524">
    <property type="term" value="F:ATP binding"/>
    <property type="evidence" value="ECO:0007669"/>
    <property type="project" value="UniProtKB-KW"/>
</dbReference>
<dbReference type="GO" id="GO:0106310">
    <property type="term" value="F:protein serine kinase activity"/>
    <property type="evidence" value="ECO:0007669"/>
    <property type="project" value="RHEA"/>
</dbReference>
<dbReference type="GO" id="GO:0004674">
    <property type="term" value="F:protein serine/threonine kinase activity"/>
    <property type="evidence" value="ECO:0007669"/>
    <property type="project" value="UniProtKB-EC"/>
</dbReference>
<dbReference type="Gene3D" id="1.10.510.10">
    <property type="entry name" value="Transferase(Phosphotransferase) domain 1"/>
    <property type="match status" value="1"/>
</dbReference>
<dbReference type="InterPro" id="IPR011009">
    <property type="entry name" value="Kinase-like_dom_sf"/>
</dbReference>
<dbReference type="InterPro" id="IPR000719">
    <property type="entry name" value="Prot_kinase_dom"/>
</dbReference>
<dbReference type="SUPFAM" id="SSF56112">
    <property type="entry name" value="Protein kinase-like (PK-like)"/>
    <property type="match status" value="1"/>
</dbReference>
<dbReference type="PROSITE" id="PS50011">
    <property type="entry name" value="PROTEIN_KINASE_DOM"/>
    <property type="match status" value="1"/>
</dbReference>
<reference key="1">
    <citation type="journal article" date="1999" name="J. Virol.">
        <title>Identification of a spliced gene from Kaposi's sarcoma-associated herpesvirus encoding a protein with similarities to latent membrane proteins 1 and 2A of Epstein-Barr virus.</title>
        <authorList>
            <person name="Glenn M."/>
            <person name="Rainbow L."/>
            <person name="Aurade F."/>
            <person name="Davison A."/>
            <person name="Schulz T.F."/>
        </authorList>
    </citation>
    <scope>NUCLEOTIDE SEQUENCE [LARGE SCALE GENOMIC DNA]</scope>
</reference>
<reference key="2">
    <citation type="journal article" date="2006" name="J. Gen. Virol.">
        <title>Kaposi's sarcoma-associated herpesvirus immune modulation: an overview.</title>
        <authorList>
            <person name="Rezaee S.A.R."/>
            <person name="Cunningham C."/>
            <person name="Davison A.J."/>
            <person name="Blackbourn D.J."/>
        </authorList>
    </citation>
    <scope>NUCLEOTIDE SEQUENCE [LARGE SCALE GENOMIC DNA]</scope>
</reference>
<reference key="3">
    <citation type="journal article" date="2000" name="J. Gen. Virol.">
        <title>Kaposi's sarcoma-associated herpesvirus (human herpesvirus-8) open reading frame 36 protein is a serine protein kinase.</title>
        <authorList>
            <person name="Park J."/>
            <person name="Lee D."/>
            <person name="Seo T."/>
            <person name="Chung J."/>
            <person name="Choe J."/>
        </authorList>
    </citation>
    <scope>SUBCELLULAR LOCATION</scope>
    <scope>FUNCTION</scope>
    <scope>MUTAGENESIS OF LYS-108</scope>
</reference>
<reference key="4">
    <citation type="journal article" date="2004" name="J. Biol. Chem.">
        <title>ORF36 protein kinase of Kaposi's sarcoma herpesvirus activates the c-Jun N-terminal kinase signaling pathway.</title>
        <authorList>
            <person name="Hamza M.S."/>
            <person name="Reyes R.A."/>
            <person name="Izumiya Y."/>
            <person name="Wisdom R."/>
            <person name="Kung H.J."/>
            <person name="Luciw P.A."/>
        </authorList>
    </citation>
    <scope>FUNCTION</scope>
</reference>
<reference key="5">
    <citation type="journal article" date="2007" name="J. Virol.">
        <title>Kaposi's sarcoma-associated herpesvirus-encoded protein kinase and its interaction with K-bZIP.</title>
        <authorList>
            <person name="Izumiya Y."/>
            <person name="Izumiya C."/>
            <person name="Van Geelen A."/>
            <person name="Wang D.H."/>
            <person name="Lam K.S."/>
            <person name="Luciw P.A."/>
            <person name="Kung H.J."/>
        </authorList>
    </citation>
    <scope>FUNCTION</scope>
    <scope>INTERACTION WITH PROTEIN K8</scope>
</reference>
<reference key="6">
    <citation type="journal article" date="2013" name="Acta Virol.">
        <title>Kaposis sarcoma-associated herpesvirus ORF36 protein induces chromosome condensation and phosphorylation of histone H3.</title>
        <authorList>
            <person name="Kim S."/>
            <person name="Cha S."/>
            <person name="Jang J.H."/>
            <person name="Kim Y."/>
            <person name="Seo T."/>
        </authorList>
    </citation>
    <scope>FUNCTION</scope>
</reference>
<reference key="7">
    <citation type="journal article" date="2013" name="J. Virol.">
        <title>Phosphorylation of Kaposi's Sarcoma-Associated Herpesvirus processivity factor ORF59 by a viral kinase modulates its ability to associate with RTA and oriLyt.</title>
        <authorList>
            <person name="McDowell M.E."/>
            <person name="Purushothaman P."/>
            <person name="Rossetto C.C."/>
            <person name="Pari G.S."/>
            <person name="Verma S.C."/>
        </authorList>
    </citation>
    <scope>FUNCTION</scope>
</reference>
<reference key="8">
    <citation type="journal article" date="2018" name="Biochem. Biophys. Res. Commun.">
        <title>KSHV vPK inhibits Wnt signaling via preventing interactions between beta-catenin and TCF4.</title>
        <authorList>
            <person name="Cha S."/>
            <person name="Kang M.S."/>
            <person name="Seo T."/>
        </authorList>
    </citation>
    <scope>FUNCTION</scope>
    <scope>INTERACTION WITH HOST BETA-CATENIN/CTNNB1</scope>
</reference>
<reference key="9">
    <citation type="journal article" date="2019" name="Cell Rep.">
        <title>Conserved Herpesvirus Protein Kinases Target SAMHD1 to Facilitate Virus Replication.</title>
        <authorList>
            <person name="Zhang K."/>
            <person name="Lv D.W."/>
            <person name="Li R."/>
        </authorList>
    </citation>
    <scope>FUNCTION</scope>
    <scope>CATALYTIC ACTIVITY</scope>
</reference>